<protein>
    <recommendedName>
        <fullName evidence="1">Regulatory protein E2</fullName>
    </recommendedName>
</protein>
<sequence>MTQMETQETLSARFLAQQDIQLNLIEKDSKNLKDHIDYWESMRKEQVLAFYAKKENMSRLGLQPLPPAKVSEQKAKDAIRIQLLLQSLYKSDFGSEPWTLSECSLEMLNAPPRNCFKKQPFTVTVQFDNDPKNVYPYICYEYIYYQDDRDKWHKVKGLVDHNGLYFKEVTGDSVYFKLFQPDATVYGKSGQWTVIFKNKTIHSSVTSSSRSAFGPADEQPGPSTSYDKSQQERSGSGQPKALQDTEPPTSTSTVRLRRGRREREHHSYRHRKSQSELGADSAPTPEEVGRRSHTVAAHGLSRLRRLQEEARDPPVLIITGQQNNLKCWRYRFSQKYADLYECCSSAWKWLGPKSEGYRGDAKLLIAFKNPEQRLSFLNTVGLPKNTTYSMGHLDSL</sequence>
<name>VE2_HPV50</name>
<evidence type="ECO:0000255" key="1">
    <source>
        <dbReference type="HAMAP-Rule" id="MF_04001"/>
    </source>
</evidence>
<evidence type="ECO:0000256" key="2">
    <source>
        <dbReference type="SAM" id="MobiDB-lite"/>
    </source>
</evidence>
<feature type="chain" id="PRO_0000133228" description="Regulatory protein E2">
    <location>
        <begin position="1"/>
        <end position="396"/>
    </location>
</feature>
<feature type="region of interest" description="Transactivation domain" evidence="1">
    <location>
        <begin position="1"/>
        <end position="208"/>
    </location>
</feature>
<feature type="region of interest" description="Disordered" evidence="2">
    <location>
        <begin position="206"/>
        <end position="292"/>
    </location>
</feature>
<feature type="region of interest" description="DNA-binding domain" evidence="1">
    <location>
        <begin position="312"/>
        <end position="396"/>
    </location>
</feature>
<feature type="compositionally biased region" description="Polar residues" evidence="2">
    <location>
        <begin position="221"/>
        <end position="237"/>
    </location>
</feature>
<organism>
    <name type="scientific">Human papillomavirus type 50</name>
    <dbReference type="NCBI Taxonomy" id="40539"/>
    <lineage>
        <taxon>Viruses</taxon>
        <taxon>Monodnaviria</taxon>
        <taxon>Shotokuvirae</taxon>
        <taxon>Cossaviricota</taxon>
        <taxon>Papovaviricetes</taxon>
        <taxon>Zurhausenvirales</taxon>
        <taxon>Papillomaviridae</taxon>
        <taxon>Firstpapillomavirinae</taxon>
        <taxon>Gammapapillomavirus</taxon>
        <taxon>Gammapapillomavirus 3</taxon>
    </lineage>
</organism>
<reference key="1">
    <citation type="submission" date="1995-07" db="EMBL/GenBank/DDBJ databases">
        <authorList>
            <person name="Delius H."/>
        </authorList>
    </citation>
    <scope>NUCLEOTIDE SEQUENCE [GENOMIC DNA]</scope>
</reference>
<accession>Q80930</accession>
<comment type="function">
    <text evidence="1">Plays a role in the initiation of viral DNA replication. A dimer of E2 interacts with a dimer of E1 in order to improve specificity of E1 DNA binding activity. Once the complex recognizes and binds DNA at specific sites, the E2 dimer is removed from DNA. E2 also regulates viral transcription through binding to the E2RE response element (5'-ACCNNNNNNGGT-3') present in multiple copies in the regulatory regions of the viral genome. Activates or represses transcription depending on E2RE's position with regards to proximal promoter elements including the TATA-box. Repression occurs by sterically hindering the assembly of the transcription initiation complex.</text>
</comment>
<comment type="subunit">
    <text evidence="1">Binds DNA as homodimer. Interacts with protein E1; this interaction greatly increases E1 DNA-binding activity. Interacts with protein L1; this interaction enhances E2-dependent replication and transcription activation. Interacts with protein L2; this interaction inhibits E2 transcriptional activity but not DNA replication function E2. Interacts with protein E7; this interaction inhibits E7 oncogenic activity. Interacts with host TAF1; this interaction modulates E2-dependent transcriptional regulation. Interacts with host BRD4; this interaction mediates E2 transcriptional activation function. Additionally, the interaction with host BRD4 on mitotic chromosomes mediates tethering of the viral genome. Interacts with host TOPBP1; this interaction is required for optimal viral DNA replication.</text>
</comment>
<comment type="subcellular location">
    <subcellularLocation>
        <location evidence="1">Host nucleus</location>
    </subcellularLocation>
</comment>
<comment type="PTM">
    <text evidence="1">Phosphorylated.</text>
</comment>
<comment type="similarity">
    <text evidence="1">Belongs to the papillomaviridae E2 protein family.</text>
</comment>
<gene>
    <name evidence="1" type="primary">E2</name>
</gene>
<dbReference type="EMBL" id="U31790">
    <property type="protein sequence ID" value="AAA79474.1"/>
    <property type="molecule type" value="Genomic_DNA"/>
</dbReference>
<dbReference type="RefSeq" id="NP_043426.1">
    <property type="nucleotide sequence ID" value="NC_001691.1"/>
</dbReference>
<dbReference type="SMR" id="Q80930"/>
<dbReference type="GeneID" id="1403632"/>
<dbReference type="KEGG" id="vg:1403632"/>
<dbReference type="OrthoDB" id="15886at10239"/>
<dbReference type="Proteomes" id="UP000168289">
    <property type="component" value="Genome"/>
</dbReference>
<dbReference type="GO" id="GO:0042025">
    <property type="term" value="C:host cell nucleus"/>
    <property type="evidence" value="ECO:0007669"/>
    <property type="project" value="UniProtKB-SubCell"/>
</dbReference>
<dbReference type="GO" id="GO:0003677">
    <property type="term" value="F:DNA binding"/>
    <property type="evidence" value="ECO:0007669"/>
    <property type="project" value="UniProtKB-UniRule"/>
</dbReference>
<dbReference type="GO" id="GO:0003700">
    <property type="term" value="F:DNA-binding transcription factor activity"/>
    <property type="evidence" value="ECO:0007669"/>
    <property type="project" value="UniProtKB-UniRule"/>
</dbReference>
<dbReference type="GO" id="GO:0000166">
    <property type="term" value="F:nucleotide binding"/>
    <property type="evidence" value="ECO:0007669"/>
    <property type="project" value="UniProtKB-UniRule"/>
</dbReference>
<dbReference type="GO" id="GO:0006260">
    <property type="term" value="P:DNA replication"/>
    <property type="evidence" value="ECO:0007669"/>
    <property type="project" value="UniProtKB-KW"/>
</dbReference>
<dbReference type="GO" id="GO:0006351">
    <property type="term" value="P:DNA-templated transcription"/>
    <property type="evidence" value="ECO:0007669"/>
    <property type="project" value="UniProtKB-UniRule"/>
</dbReference>
<dbReference type="GO" id="GO:0006275">
    <property type="term" value="P:regulation of DNA replication"/>
    <property type="evidence" value="ECO:0007669"/>
    <property type="project" value="UniProtKB-UniRule"/>
</dbReference>
<dbReference type="GO" id="GO:0039693">
    <property type="term" value="P:viral DNA genome replication"/>
    <property type="evidence" value="ECO:0007669"/>
    <property type="project" value="UniProtKB-UniRule"/>
</dbReference>
<dbReference type="Gene3D" id="3.30.70.330">
    <property type="match status" value="1"/>
</dbReference>
<dbReference type="Gene3D" id="1.10.287.30">
    <property type="entry name" value="E2 (early) protein, N terminal domain, subdomain 1"/>
    <property type="match status" value="1"/>
</dbReference>
<dbReference type="Gene3D" id="2.170.200.10">
    <property type="entry name" value="Papillomavirus E2 early protein domain"/>
    <property type="match status" value="1"/>
</dbReference>
<dbReference type="HAMAP" id="MF_04001">
    <property type="entry name" value="PPV_E2"/>
    <property type="match status" value="1"/>
</dbReference>
<dbReference type="InterPro" id="IPR035975">
    <property type="entry name" value="E2/EBNA1_C_sf"/>
</dbReference>
<dbReference type="InterPro" id="IPR012677">
    <property type="entry name" value="Nucleotide-bd_a/b_plait_sf"/>
</dbReference>
<dbReference type="InterPro" id="IPR000427">
    <property type="entry name" value="Papillomavirus_E2_C"/>
</dbReference>
<dbReference type="InterPro" id="IPR001866">
    <property type="entry name" value="PPV_E2_N"/>
</dbReference>
<dbReference type="InterPro" id="IPR033668">
    <property type="entry name" value="Reg_prot_E2"/>
</dbReference>
<dbReference type="InterPro" id="IPR036050">
    <property type="entry name" value="Regulatory_protein_E2_N"/>
</dbReference>
<dbReference type="InterPro" id="IPR042503">
    <property type="entry name" value="Regulatory_protein_E2_N_1"/>
</dbReference>
<dbReference type="InterPro" id="IPR042504">
    <property type="entry name" value="Regulatory_protein_E2_N_2"/>
</dbReference>
<dbReference type="Pfam" id="PF00511">
    <property type="entry name" value="PPV_E2_C"/>
    <property type="match status" value="1"/>
</dbReference>
<dbReference type="Pfam" id="PF00508">
    <property type="entry name" value="PPV_E2_N"/>
    <property type="match status" value="1"/>
</dbReference>
<dbReference type="SUPFAM" id="SSF51332">
    <property type="entry name" value="E2 regulatory, transactivation domain"/>
    <property type="match status" value="1"/>
</dbReference>
<dbReference type="SUPFAM" id="SSF54957">
    <property type="entry name" value="Viral DNA-binding domain"/>
    <property type="match status" value="1"/>
</dbReference>
<keyword id="KW-0010">Activator</keyword>
<keyword id="KW-0235">DNA replication</keyword>
<keyword id="KW-0238">DNA-binding</keyword>
<keyword id="KW-0244">Early protein</keyword>
<keyword id="KW-1048">Host nucleus</keyword>
<keyword id="KW-0597">Phosphoprotein</keyword>
<keyword id="KW-1185">Reference proteome</keyword>
<keyword id="KW-0678">Repressor</keyword>
<keyword id="KW-0804">Transcription</keyword>
<keyword id="KW-0805">Transcription regulation</keyword>
<proteinExistence type="inferred from homology"/>
<organismHost>
    <name type="scientific">Homo sapiens</name>
    <name type="common">Human</name>
    <dbReference type="NCBI Taxonomy" id="9606"/>
</organismHost>